<accession>Q9CU24</accession>
<feature type="chain" id="PRO_0000383152" description="Protein THEMIS3">
    <location>
        <begin position="1"/>
        <end position="569"/>
    </location>
</feature>
<feature type="region of interest" description="CABIT 1">
    <location>
        <begin position="1"/>
        <end position="254"/>
    </location>
</feature>
<feature type="region of interest" description="CABIT 2">
    <location>
        <begin position="255"/>
        <end position="523"/>
    </location>
</feature>
<keyword id="KW-1185">Reference proteome</keyword>
<sequence length="569" mass="64720">MEQTWDSYISSLNQNSLPRQVEVTQGRYSGSLENLSFSKGDIITVVDLEPVFVRAELKDGDQVLDVVTIPLRYEGNFQLMADPVSFETVADLTRSVRLPQSPVAPRSPPRFQNSIPISADNLPMKLRKGETLSLIGFQESRGRRLLQCKVLRKKPPLTVLLPMDCRGHFLECQDDRFYSIDTIVRWKMLAGRKRTVRVQARHHPKLLGPLVPEHFRGHLVLYPCFSVTANLLGETRVSIPSDLDISVTEIARLDRKPRTTMRQIYSMEESKFPVRVKIMNVVQSESKEYPKPLKRGQLLTILKTEEVKKFVASEISQGKKGKCFLVPYTYQGLVLRRGRYFYAVSDVAAAMKHGELCFQASQDYTSYLGSFASFRANECFLALKKSVVSAEIHGELHRVEVLKCLNIATKAHVKLPLFAVGKFLELFDGARPGTLQELCQVTRLPCHVRVTSPDPSMTVDPLYGTKELRIENVIIEQCLIAKDEPTLEDIISSADMYREWPETTFEIPIEKISCEVLVVEERSWIADVRKERCRPLQSIQEVTKESLAFSNCLVIRRPPPPVPKPRSLF</sequence>
<dbReference type="EMBL" id="AK018663">
    <property type="protein sequence ID" value="BAB31332.1"/>
    <property type="molecule type" value="mRNA"/>
</dbReference>
<dbReference type="EMBL" id="CH466537">
    <property type="protein sequence ID" value="EDL38333.1"/>
    <property type="molecule type" value="Genomic_DNA"/>
</dbReference>
<dbReference type="EMBL" id="AC122445">
    <property type="status" value="NOT_ANNOTATED_CDS"/>
    <property type="molecule type" value="Genomic_DNA"/>
</dbReference>
<dbReference type="EMBL" id="CT010496">
    <property type="status" value="NOT_ANNOTATED_CDS"/>
    <property type="molecule type" value="Genomic_DNA"/>
</dbReference>
<dbReference type="CCDS" id="CCDS50170.1"/>
<dbReference type="RefSeq" id="NP_083274.1">
    <property type="nucleotide sequence ID" value="NM_028998.2"/>
</dbReference>
<dbReference type="STRING" id="10090.ENSMUSP00000024914"/>
<dbReference type="iPTMnet" id="Q9CU24"/>
<dbReference type="PhosphoSitePlus" id="Q9CU24"/>
<dbReference type="PaxDb" id="10090-ENSMUSP00000024914"/>
<dbReference type="ProteomicsDB" id="262917"/>
<dbReference type="Ensembl" id="ENSMUST00000024914.4">
    <property type="protein sequence ID" value="ENSMUSP00000024914.3"/>
    <property type="gene ID" value="ENSMUSG00000024105.4"/>
</dbReference>
<dbReference type="GeneID" id="74556"/>
<dbReference type="KEGG" id="mmu:74556"/>
<dbReference type="UCSC" id="uc008djz.2">
    <property type="organism name" value="mouse"/>
</dbReference>
<dbReference type="AGR" id="MGI:1921806"/>
<dbReference type="CTD" id="74556"/>
<dbReference type="MGI" id="MGI:1921806">
    <property type="gene designation" value="Themis3"/>
</dbReference>
<dbReference type="VEuPathDB" id="HostDB:ENSMUSG00000024105"/>
<dbReference type="eggNOG" id="ENOG502SJ9V">
    <property type="taxonomic scope" value="Eukaryota"/>
</dbReference>
<dbReference type="GeneTree" id="ENSGT00530000063770"/>
<dbReference type="HOGENOM" id="CLU_022319_1_0_1"/>
<dbReference type="InParanoid" id="Q9CU24"/>
<dbReference type="OMA" id="MRQIYSM"/>
<dbReference type="OrthoDB" id="9947228at2759"/>
<dbReference type="PhylomeDB" id="Q9CU24"/>
<dbReference type="TreeFam" id="TF333479"/>
<dbReference type="BioGRID-ORCS" id="74556">
    <property type="hits" value="2 hits in 76 CRISPR screens"/>
</dbReference>
<dbReference type="ChiTaRS" id="Themis3">
    <property type="organism name" value="mouse"/>
</dbReference>
<dbReference type="PRO" id="PR:Q9CU24"/>
<dbReference type="Proteomes" id="UP000000589">
    <property type="component" value="Chromosome 17"/>
</dbReference>
<dbReference type="RNAct" id="Q9CU24">
    <property type="molecule type" value="protein"/>
</dbReference>
<dbReference type="Bgee" id="ENSMUSG00000024105">
    <property type="expression patterns" value="Expressed in jejunum and 34 other cell types or tissues"/>
</dbReference>
<dbReference type="InterPro" id="IPR025946">
    <property type="entry name" value="CABIT_dom"/>
</dbReference>
<dbReference type="InterPro" id="IPR039671">
    <property type="entry name" value="THEMIS"/>
</dbReference>
<dbReference type="PANTHER" id="PTHR15215">
    <property type="entry name" value="CABIT DOMAIN-CONTAINING PROTEIN"/>
    <property type="match status" value="1"/>
</dbReference>
<dbReference type="PANTHER" id="PTHR15215:SF3">
    <property type="entry name" value="PROTEIN THEMIS3"/>
    <property type="match status" value="1"/>
</dbReference>
<dbReference type="Pfam" id="PF12736">
    <property type="entry name" value="CABIT"/>
    <property type="match status" value="2"/>
</dbReference>
<organism>
    <name type="scientific">Mus musculus</name>
    <name type="common">Mouse</name>
    <dbReference type="NCBI Taxonomy" id="10090"/>
    <lineage>
        <taxon>Eukaryota</taxon>
        <taxon>Metazoa</taxon>
        <taxon>Chordata</taxon>
        <taxon>Craniata</taxon>
        <taxon>Vertebrata</taxon>
        <taxon>Euteleostomi</taxon>
        <taxon>Mammalia</taxon>
        <taxon>Eutheria</taxon>
        <taxon>Euarchontoglires</taxon>
        <taxon>Glires</taxon>
        <taxon>Rodentia</taxon>
        <taxon>Myomorpha</taxon>
        <taxon>Muroidea</taxon>
        <taxon>Muridae</taxon>
        <taxon>Murinae</taxon>
        <taxon>Mus</taxon>
        <taxon>Mus</taxon>
    </lineage>
</organism>
<proteinExistence type="evidence at transcript level"/>
<comment type="tissue specificity">
    <text evidence="1">Specifically expressed in the intestine.</text>
</comment>
<comment type="similarity">
    <text evidence="2">Belongs to the themis family.</text>
</comment>
<reference key="1">
    <citation type="journal article" date="2005" name="Science">
        <title>The transcriptional landscape of the mammalian genome.</title>
        <authorList>
            <person name="Carninci P."/>
            <person name="Kasukawa T."/>
            <person name="Katayama S."/>
            <person name="Gough J."/>
            <person name="Frith M.C."/>
            <person name="Maeda N."/>
            <person name="Oyama R."/>
            <person name="Ravasi T."/>
            <person name="Lenhard B."/>
            <person name="Wells C."/>
            <person name="Kodzius R."/>
            <person name="Shimokawa K."/>
            <person name="Bajic V.B."/>
            <person name="Brenner S.E."/>
            <person name="Batalov S."/>
            <person name="Forrest A.R."/>
            <person name="Zavolan M."/>
            <person name="Davis M.J."/>
            <person name="Wilming L.G."/>
            <person name="Aidinis V."/>
            <person name="Allen J.E."/>
            <person name="Ambesi-Impiombato A."/>
            <person name="Apweiler R."/>
            <person name="Aturaliya R.N."/>
            <person name="Bailey T.L."/>
            <person name="Bansal M."/>
            <person name="Baxter L."/>
            <person name="Beisel K.W."/>
            <person name="Bersano T."/>
            <person name="Bono H."/>
            <person name="Chalk A.M."/>
            <person name="Chiu K.P."/>
            <person name="Choudhary V."/>
            <person name="Christoffels A."/>
            <person name="Clutterbuck D.R."/>
            <person name="Crowe M.L."/>
            <person name="Dalla E."/>
            <person name="Dalrymple B.P."/>
            <person name="de Bono B."/>
            <person name="Della Gatta G."/>
            <person name="di Bernardo D."/>
            <person name="Down T."/>
            <person name="Engstrom P."/>
            <person name="Fagiolini M."/>
            <person name="Faulkner G."/>
            <person name="Fletcher C.F."/>
            <person name="Fukushima T."/>
            <person name="Furuno M."/>
            <person name="Futaki S."/>
            <person name="Gariboldi M."/>
            <person name="Georgii-Hemming P."/>
            <person name="Gingeras T.R."/>
            <person name="Gojobori T."/>
            <person name="Green R.E."/>
            <person name="Gustincich S."/>
            <person name="Harbers M."/>
            <person name="Hayashi Y."/>
            <person name="Hensch T.K."/>
            <person name="Hirokawa N."/>
            <person name="Hill D."/>
            <person name="Huminiecki L."/>
            <person name="Iacono M."/>
            <person name="Ikeo K."/>
            <person name="Iwama A."/>
            <person name="Ishikawa T."/>
            <person name="Jakt M."/>
            <person name="Kanapin A."/>
            <person name="Katoh M."/>
            <person name="Kawasawa Y."/>
            <person name="Kelso J."/>
            <person name="Kitamura H."/>
            <person name="Kitano H."/>
            <person name="Kollias G."/>
            <person name="Krishnan S.P."/>
            <person name="Kruger A."/>
            <person name="Kummerfeld S.K."/>
            <person name="Kurochkin I.V."/>
            <person name="Lareau L.F."/>
            <person name="Lazarevic D."/>
            <person name="Lipovich L."/>
            <person name="Liu J."/>
            <person name="Liuni S."/>
            <person name="McWilliam S."/>
            <person name="Madan Babu M."/>
            <person name="Madera M."/>
            <person name="Marchionni L."/>
            <person name="Matsuda H."/>
            <person name="Matsuzawa S."/>
            <person name="Miki H."/>
            <person name="Mignone F."/>
            <person name="Miyake S."/>
            <person name="Morris K."/>
            <person name="Mottagui-Tabar S."/>
            <person name="Mulder N."/>
            <person name="Nakano N."/>
            <person name="Nakauchi H."/>
            <person name="Ng P."/>
            <person name="Nilsson R."/>
            <person name="Nishiguchi S."/>
            <person name="Nishikawa S."/>
            <person name="Nori F."/>
            <person name="Ohara O."/>
            <person name="Okazaki Y."/>
            <person name="Orlando V."/>
            <person name="Pang K.C."/>
            <person name="Pavan W.J."/>
            <person name="Pavesi G."/>
            <person name="Pesole G."/>
            <person name="Petrovsky N."/>
            <person name="Piazza S."/>
            <person name="Reed J."/>
            <person name="Reid J.F."/>
            <person name="Ring B.Z."/>
            <person name="Ringwald M."/>
            <person name="Rost B."/>
            <person name="Ruan Y."/>
            <person name="Salzberg S.L."/>
            <person name="Sandelin A."/>
            <person name="Schneider C."/>
            <person name="Schoenbach C."/>
            <person name="Sekiguchi K."/>
            <person name="Semple C.A."/>
            <person name="Seno S."/>
            <person name="Sessa L."/>
            <person name="Sheng Y."/>
            <person name="Shibata Y."/>
            <person name="Shimada H."/>
            <person name="Shimada K."/>
            <person name="Silva D."/>
            <person name="Sinclair B."/>
            <person name="Sperling S."/>
            <person name="Stupka E."/>
            <person name="Sugiura K."/>
            <person name="Sultana R."/>
            <person name="Takenaka Y."/>
            <person name="Taki K."/>
            <person name="Tammoja K."/>
            <person name="Tan S.L."/>
            <person name="Tang S."/>
            <person name="Taylor M.S."/>
            <person name="Tegner J."/>
            <person name="Teichmann S.A."/>
            <person name="Ueda H.R."/>
            <person name="van Nimwegen E."/>
            <person name="Verardo R."/>
            <person name="Wei C.L."/>
            <person name="Yagi K."/>
            <person name="Yamanishi H."/>
            <person name="Zabarovsky E."/>
            <person name="Zhu S."/>
            <person name="Zimmer A."/>
            <person name="Hide W."/>
            <person name="Bult C."/>
            <person name="Grimmond S.M."/>
            <person name="Teasdale R.D."/>
            <person name="Liu E.T."/>
            <person name="Brusic V."/>
            <person name="Quackenbush J."/>
            <person name="Wahlestedt C."/>
            <person name="Mattick J.S."/>
            <person name="Hume D.A."/>
            <person name="Kai C."/>
            <person name="Sasaki D."/>
            <person name="Tomaru Y."/>
            <person name="Fukuda S."/>
            <person name="Kanamori-Katayama M."/>
            <person name="Suzuki M."/>
            <person name="Aoki J."/>
            <person name="Arakawa T."/>
            <person name="Iida J."/>
            <person name="Imamura K."/>
            <person name="Itoh M."/>
            <person name="Kato T."/>
            <person name="Kawaji H."/>
            <person name="Kawagashira N."/>
            <person name="Kawashima T."/>
            <person name="Kojima M."/>
            <person name="Kondo S."/>
            <person name="Konno H."/>
            <person name="Nakano K."/>
            <person name="Ninomiya N."/>
            <person name="Nishio T."/>
            <person name="Okada M."/>
            <person name="Plessy C."/>
            <person name="Shibata K."/>
            <person name="Shiraki T."/>
            <person name="Suzuki S."/>
            <person name="Tagami M."/>
            <person name="Waki K."/>
            <person name="Watahiki A."/>
            <person name="Okamura-Oho Y."/>
            <person name="Suzuki H."/>
            <person name="Kawai J."/>
            <person name="Hayashizaki Y."/>
        </authorList>
    </citation>
    <scope>NUCLEOTIDE SEQUENCE [LARGE SCALE MRNA]</scope>
    <source>
        <strain>C57BL/6J</strain>
        <tissue>Cecum</tissue>
    </source>
</reference>
<reference key="2">
    <citation type="journal article" date="2009" name="PLoS Biol.">
        <title>Lineage-specific biology revealed by a finished genome assembly of the mouse.</title>
        <authorList>
            <person name="Church D.M."/>
            <person name="Goodstadt L."/>
            <person name="Hillier L.W."/>
            <person name="Zody M.C."/>
            <person name="Goldstein S."/>
            <person name="She X."/>
            <person name="Bult C.J."/>
            <person name="Agarwala R."/>
            <person name="Cherry J.L."/>
            <person name="DiCuccio M."/>
            <person name="Hlavina W."/>
            <person name="Kapustin Y."/>
            <person name="Meric P."/>
            <person name="Maglott D."/>
            <person name="Birtle Z."/>
            <person name="Marques A.C."/>
            <person name="Graves T."/>
            <person name="Zhou S."/>
            <person name="Teague B."/>
            <person name="Potamousis K."/>
            <person name="Churas C."/>
            <person name="Place M."/>
            <person name="Herschleb J."/>
            <person name="Runnheim R."/>
            <person name="Forrest D."/>
            <person name="Amos-Landgraf J."/>
            <person name="Schwartz D.C."/>
            <person name="Cheng Z."/>
            <person name="Lindblad-Toh K."/>
            <person name="Eichler E.E."/>
            <person name="Ponting C.P."/>
        </authorList>
    </citation>
    <scope>NUCLEOTIDE SEQUENCE [LARGE SCALE GENOMIC DNA]</scope>
    <source>
        <strain>C57BL/6J</strain>
    </source>
</reference>
<reference key="3">
    <citation type="submission" date="2005-07" db="EMBL/GenBank/DDBJ databases">
        <authorList>
            <person name="Mural R.J."/>
            <person name="Adams M.D."/>
            <person name="Myers E.W."/>
            <person name="Smith H.O."/>
            <person name="Venter J.C."/>
        </authorList>
    </citation>
    <scope>NUCLEOTIDE SEQUENCE [LARGE SCALE GENOMIC DNA]</scope>
</reference>
<reference key="4">
    <citation type="journal article" date="2009" name="Nat. Immunol.">
        <title>Themis controls thymocyte selection through regulation of T cell antigen receptor-mediated signaling.</title>
        <authorList>
            <person name="Fu G."/>
            <person name="Vallee S."/>
            <person name="Rybakin V."/>
            <person name="McGuire M.V."/>
            <person name="Ampudia J."/>
            <person name="Brockmeyer C."/>
            <person name="Salek M."/>
            <person name="Fallen P.R."/>
            <person name="Hoerter J.A.H."/>
            <person name="Munshi A."/>
            <person name="Huang Y.H."/>
            <person name="Hu J."/>
            <person name="Fox H.S."/>
            <person name="Sauer K."/>
            <person name="Acuto O."/>
            <person name="Gascoigne N.R.J."/>
        </authorList>
    </citation>
    <scope>TISSUE SPECIFICITY</scope>
</reference>
<reference key="5">
    <citation type="journal article" date="2009" name="Nat. Immunol.">
        <title>Themis is a member of a new metazoan gene family and is required for the completion of thymocyte positive selection.</title>
        <authorList>
            <person name="Johnson A.L."/>
            <person name="Aravind L."/>
            <person name="Shulzhenko N."/>
            <person name="Morgun A."/>
            <person name="Choi S.-Y."/>
            <person name="Crockford T.L."/>
            <person name="Lambe T."/>
            <person name="Domaschenz H."/>
            <person name="Kucharska E.M."/>
            <person name="Zheng L."/>
            <person name="Vinuesa C.G."/>
            <person name="Lenardo M.J."/>
            <person name="Goodnow C.C."/>
            <person name="Cornall R.J."/>
            <person name="Schwartz R.H."/>
        </authorList>
    </citation>
    <scope>IDENTIFICATION</scope>
</reference>
<name>THMS3_MOUSE</name>
<protein>
    <recommendedName>
        <fullName>Protein THEMIS3</fullName>
    </recommendedName>
    <alternativeName>
        <fullName>Thymocyte-expressed molecule involved in selection protein 3</fullName>
    </alternativeName>
</protein>
<gene>
    <name type="primary">Themis3</name>
</gene>
<evidence type="ECO:0000269" key="1">
    <source>
    </source>
</evidence>
<evidence type="ECO:0000305" key="2"/>